<evidence type="ECO:0000255" key="1">
    <source>
        <dbReference type="HAMAP-Rule" id="MF_00019"/>
    </source>
</evidence>
<comment type="function">
    <text evidence="1">Catalyzes the reversible formation of acyl-phosphate (acyl-PO(4)) from acyl-[acyl-carrier-protein] (acyl-ACP). This enzyme utilizes acyl-ACP as fatty acyl donor, but not acyl-CoA.</text>
</comment>
<comment type="catalytic activity">
    <reaction evidence="1">
        <text>a fatty acyl-[ACP] + phosphate = an acyl phosphate + holo-[ACP]</text>
        <dbReference type="Rhea" id="RHEA:42292"/>
        <dbReference type="Rhea" id="RHEA-COMP:9685"/>
        <dbReference type="Rhea" id="RHEA-COMP:14125"/>
        <dbReference type="ChEBI" id="CHEBI:43474"/>
        <dbReference type="ChEBI" id="CHEBI:59918"/>
        <dbReference type="ChEBI" id="CHEBI:64479"/>
        <dbReference type="ChEBI" id="CHEBI:138651"/>
        <dbReference type="EC" id="2.3.1.274"/>
    </reaction>
</comment>
<comment type="pathway">
    <text evidence="1">Lipid metabolism; phospholipid metabolism.</text>
</comment>
<comment type="subunit">
    <text evidence="1">Homodimer. Probably interacts with PlsY.</text>
</comment>
<comment type="subcellular location">
    <subcellularLocation>
        <location evidence="1">Cytoplasm</location>
    </subcellularLocation>
    <text evidence="1">Associated with the membrane possibly through PlsY.</text>
</comment>
<comment type="similarity">
    <text evidence="1">Belongs to the PlsX family.</text>
</comment>
<name>PLSX_STRPQ</name>
<organism>
    <name type="scientific">Streptococcus pyogenes serotype M3 (strain SSI-1)</name>
    <dbReference type="NCBI Taxonomy" id="193567"/>
    <lineage>
        <taxon>Bacteria</taxon>
        <taxon>Bacillati</taxon>
        <taxon>Bacillota</taxon>
        <taxon>Bacilli</taxon>
        <taxon>Lactobacillales</taxon>
        <taxon>Streptococcaceae</taxon>
        <taxon>Streptococcus</taxon>
    </lineage>
</organism>
<dbReference type="EC" id="2.3.1.274" evidence="1"/>
<dbReference type="EMBL" id="BA000034">
    <property type="protein sequence ID" value="BAC63113.1"/>
    <property type="molecule type" value="Genomic_DNA"/>
</dbReference>
<dbReference type="RefSeq" id="WP_002987696.1">
    <property type="nucleotide sequence ID" value="NC_004606.1"/>
</dbReference>
<dbReference type="SMR" id="P0DD09"/>
<dbReference type="KEGG" id="sps:SPs0018"/>
<dbReference type="HOGENOM" id="CLU_039379_1_1_9"/>
<dbReference type="UniPathway" id="UPA00085"/>
<dbReference type="GO" id="GO:0005737">
    <property type="term" value="C:cytoplasm"/>
    <property type="evidence" value="ECO:0007669"/>
    <property type="project" value="UniProtKB-SubCell"/>
</dbReference>
<dbReference type="GO" id="GO:0043811">
    <property type="term" value="F:phosphate:acyl-[acyl carrier protein] acyltransferase activity"/>
    <property type="evidence" value="ECO:0007669"/>
    <property type="project" value="UniProtKB-UniRule"/>
</dbReference>
<dbReference type="GO" id="GO:0006633">
    <property type="term" value="P:fatty acid biosynthetic process"/>
    <property type="evidence" value="ECO:0007669"/>
    <property type="project" value="UniProtKB-UniRule"/>
</dbReference>
<dbReference type="GO" id="GO:0008654">
    <property type="term" value="P:phospholipid biosynthetic process"/>
    <property type="evidence" value="ECO:0007669"/>
    <property type="project" value="UniProtKB-KW"/>
</dbReference>
<dbReference type="Gene3D" id="3.40.718.10">
    <property type="entry name" value="Isopropylmalate Dehydrogenase"/>
    <property type="match status" value="1"/>
</dbReference>
<dbReference type="HAMAP" id="MF_00019">
    <property type="entry name" value="PlsX"/>
    <property type="match status" value="1"/>
</dbReference>
<dbReference type="InterPro" id="IPR003664">
    <property type="entry name" value="FA_synthesis"/>
</dbReference>
<dbReference type="InterPro" id="IPR012281">
    <property type="entry name" value="Phospholipid_synth_PlsX-like"/>
</dbReference>
<dbReference type="NCBIfam" id="TIGR00182">
    <property type="entry name" value="plsX"/>
    <property type="match status" value="1"/>
</dbReference>
<dbReference type="PANTHER" id="PTHR30100">
    <property type="entry name" value="FATTY ACID/PHOSPHOLIPID SYNTHESIS PROTEIN PLSX"/>
    <property type="match status" value="1"/>
</dbReference>
<dbReference type="PANTHER" id="PTHR30100:SF1">
    <property type="entry name" value="PHOSPHATE ACYLTRANSFERASE"/>
    <property type="match status" value="1"/>
</dbReference>
<dbReference type="Pfam" id="PF02504">
    <property type="entry name" value="FA_synthesis"/>
    <property type="match status" value="1"/>
</dbReference>
<dbReference type="PIRSF" id="PIRSF002465">
    <property type="entry name" value="Phsphlp_syn_PlsX"/>
    <property type="match status" value="1"/>
</dbReference>
<dbReference type="SUPFAM" id="SSF53659">
    <property type="entry name" value="Isocitrate/Isopropylmalate dehydrogenase-like"/>
    <property type="match status" value="1"/>
</dbReference>
<sequence length="335" mass="35497">MKRIAIDAMGGDNAPKAIVEGVNQAIEAFSDIEIQLYGDQTKINSYLIQSDRVAIIHTDEKIMSDDEPAKAVRRKKKASMVLAAKAVKEGKADAIISAGNTGALLAVGLFVVGRIKGVDRPGLLSTIPTVTGLGFDMLDLGANAENTAKHLHQYAILGSFYAKNVRGIANPRVGLLNNGTEETKGDPLRKATYELLTADNTISFVGNVEARELMSGVADVIVSDGFTGNAVLKSIEGTAISIMGQLKQIINSGGIKTKIGASLLKSSLYEMKKTLDYSSAGGAVLFGLKAPVVKSHGSSDVKAIFSTIKQVRTMLDTNVVGQLVEEFAKETQVND</sequence>
<reference key="1">
    <citation type="journal article" date="2003" name="Genome Res.">
        <title>Genome sequence of an M3 strain of Streptococcus pyogenes reveals a large-scale genomic rearrangement in invasive strains and new insights into phage evolution.</title>
        <authorList>
            <person name="Nakagawa I."/>
            <person name="Kurokawa K."/>
            <person name="Yamashita A."/>
            <person name="Nakata M."/>
            <person name="Tomiyasu Y."/>
            <person name="Okahashi N."/>
            <person name="Kawabata S."/>
            <person name="Yamazaki K."/>
            <person name="Shiba T."/>
            <person name="Yasunaga T."/>
            <person name="Hayashi H."/>
            <person name="Hattori M."/>
            <person name="Hamada S."/>
        </authorList>
    </citation>
    <scope>NUCLEOTIDE SEQUENCE [LARGE SCALE GENOMIC DNA]</scope>
    <source>
        <strain>SSI-1</strain>
    </source>
</reference>
<feature type="chain" id="PRO_0000411442" description="Phosphate acyltransferase">
    <location>
        <begin position="1"/>
        <end position="335"/>
    </location>
</feature>
<protein>
    <recommendedName>
        <fullName evidence="1">Phosphate acyltransferase</fullName>
        <ecNumber evidence="1">2.3.1.274</ecNumber>
    </recommendedName>
    <alternativeName>
        <fullName evidence="1">Acyl-ACP phosphotransacylase</fullName>
    </alternativeName>
    <alternativeName>
        <fullName evidence="1">Acyl-[acyl-carrier-protein]--phosphate acyltransferase</fullName>
    </alternativeName>
    <alternativeName>
        <fullName evidence="1">Phosphate-acyl-ACP acyltransferase</fullName>
    </alternativeName>
</protein>
<gene>
    <name evidence="1" type="primary">plsX</name>
    <name type="ordered locus">SPs0018</name>
</gene>
<keyword id="KW-0963">Cytoplasm</keyword>
<keyword id="KW-0444">Lipid biosynthesis</keyword>
<keyword id="KW-0443">Lipid metabolism</keyword>
<keyword id="KW-0594">Phospholipid biosynthesis</keyword>
<keyword id="KW-1208">Phospholipid metabolism</keyword>
<keyword id="KW-0808">Transferase</keyword>
<accession>P0DD09</accession>
<accession>P65743</accession>
<accession>Q9A1Z5</accession>
<proteinExistence type="inferred from homology"/>